<name>RL29_ECO27</name>
<reference key="1">
    <citation type="journal article" date="2009" name="J. Bacteriol.">
        <title>Complete genome sequence and comparative genome analysis of enteropathogenic Escherichia coli O127:H6 strain E2348/69.</title>
        <authorList>
            <person name="Iguchi A."/>
            <person name="Thomson N.R."/>
            <person name="Ogura Y."/>
            <person name="Saunders D."/>
            <person name="Ooka T."/>
            <person name="Henderson I.R."/>
            <person name="Harris D."/>
            <person name="Asadulghani M."/>
            <person name="Kurokawa K."/>
            <person name="Dean P."/>
            <person name="Kenny B."/>
            <person name="Quail M.A."/>
            <person name="Thurston S."/>
            <person name="Dougan G."/>
            <person name="Hayashi T."/>
            <person name="Parkhill J."/>
            <person name="Frankel G."/>
        </authorList>
    </citation>
    <scope>NUCLEOTIDE SEQUENCE [LARGE SCALE GENOMIC DNA]</scope>
    <source>
        <strain>E2348/69 / EPEC</strain>
    </source>
</reference>
<feature type="chain" id="PRO_1000194015" description="Large ribosomal subunit protein uL29">
    <location>
        <begin position="1"/>
        <end position="63"/>
    </location>
</feature>
<organism>
    <name type="scientific">Escherichia coli O127:H6 (strain E2348/69 / EPEC)</name>
    <dbReference type="NCBI Taxonomy" id="574521"/>
    <lineage>
        <taxon>Bacteria</taxon>
        <taxon>Pseudomonadati</taxon>
        <taxon>Pseudomonadota</taxon>
        <taxon>Gammaproteobacteria</taxon>
        <taxon>Enterobacterales</taxon>
        <taxon>Enterobacteriaceae</taxon>
        <taxon>Escherichia</taxon>
    </lineage>
</organism>
<evidence type="ECO:0000255" key="1">
    <source>
        <dbReference type="HAMAP-Rule" id="MF_00374"/>
    </source>
</evidence>
<evidence type="ECO:0000305" key="2"/>
<accession>B7UK36</accession>
<protein>
    <recommendedName>
        <fullName evidence="1">Large ribosomal subunit protein uL29</fullName>
    </recommendedName>
    <alternativeName>
        <fullName evidence="2">50S ribosomal protein L29</fullName>
    </alternativeName>
</protein>
<comment type="similarity">
    <text evidence="1">Belongs to the universal ribosomal protein uL29 family.</text>
</comment>
<sequence length="63" mass="7273">MKAKELREKSVEELNTELLNLLREQFNLRMQAASGQLQQSHLLKQVRRDVARVKTLLNEKAGA</sequence>
<proteinExistence type="inferred from homology"/>
<gene>
    <name evidence="1" type="primary">rpmC</name>
    <name type="ordered locus">E2348C_3575</name>
</gene>
<keyword id="KW-1185">Reference proteome</keyword>
<keyword id="KW-0687">Ribonucleoprotein</keyword>
<keyword id="KW-0689">Ribosomal protein</keyword>
<dbReference type="EMBL" id="FM180568">
    <property type="protein sequence ID" value="CAS11123.1"/>
    <property type="molecule type" value="Genomic_DNA"/>
</dbReference>
<dbReference type="RefSeq" id="WP_000644741.1">
    <property type="nucleotide sequence ID" value="NC_011601.1"/>
</dbReference>
<dbReference type="SMR" id="B7UK36"/>
<dbReference type="GeneID" id="93778675"/>
<dbReference type="KEGG" id="ecg:E2348C_3575"/>
<dbReference type="HOGENOM" id="CLU_158491_1_2_6"/>
<dbReference type="Proteomes" id="UP000008205">
    <property type="component" value="Chromosome"/>
</dbReference>
<dbReference type="GO" id="GO:0022625">
    <property type="term" value="C:cytosolic large ribosomal subunit"/>
    <property type="evidence" value="ECO:0007669"/>
    <property type="project" value="TreeGrafter"/>
</dbReference>
<dbReference type="GO" id="GO:0003735">
    <property type="term" value="F:structural constituent of ribosome"/>
    <property type="evidence" value="ECO:0007669"/>
    <property type="project" value="InterPro"/>
</dbReference>
<dbReference type="GO" id="GO:0006412">
    <property type="term" value="P:translation"/>
    <property type="evidence" value="ECO:0007669"/>
    <property type="project" value="UniProtKB-UniRule"/>
</dbReference>
<dbReference type="CDD" id="cd00427">
    <property type="entry name" value="Ribosomal_L29_HIP"/>
    <property type="match status" value="1"/>
</dbReference>
<dbReference type="Gene3D" id="6.10.140.1970">
    <property type="match status" value="1"/>
</dbReference>
<dbReference type="HAMAP" id="MF_00374">
    <property type="entry name" value="Ribosomal_uL29"/>
    <property type="match status" value="1"/>
</dbReference>
<dbReference type="InterPro" id="IPR050063">
    <property type="entry name" value="Ribosomal_protein_uL29"/>
</dbReference>
<dbReference type="InterPro" id="IPR001854">
    <property type="entry name" value="Ribosomal_uL29"/>
</dbReference>
<dbReference type="InterPro" id="IPR018254">
    <property type="entry name" value="Ribosomal_uL29_CS"/>
</dbReference>
<dbReference type="InterPro" id="IPR036049">
    <property type="entry name" value="Ribosomal_uL29_sf"/>
</dbReference>
<dbReference type="NCBIfam" id="TIGR00012">
    <property type="entry name" value="L29"/>
    <property type="match status" value="1"/>
</dbReference>
<dbReference type="PANTHER" id="PTHR10916">
    <property type="entry name" value="60S RIBOSOMAL PROTEIN L35/50S RIBOSOMAL PROTEIN L29"/>
    <property type="match status" value="1"/>
</dbReference>
<dbReference type="PANTHER" id="PTHR10916:SF0">
    <property type="entry name" value="LARGE RIBOSOMAL SUBUNIT PROTEIN UL29C"/>
    <property type="match status" value="1"/>
</dbReference>
<dbReference type="Pfam" id="PF00831">
    <property type="entry name" value="Ribosomal_L29"/>
    <property type="match status" value="1"/>
</dbReference>
<dbReference type="SUPFAM" id="SSF46561">
    <property type="entry name" value="Ribosomal protein L29 (L29p)"/>
    <property type="match status" value="1"/>
</dbReference>
<dbReference type="PROSITE" id="PS00579">
    <property type="entry name" value="RIBOSOMAL_L29"/>
    <property type="match status" value="1"/>
</dbReference>